<reference key="1">
    <citation type="submission" date="2006-01" db="EMBL/GenBank/DDBJ databases">
        <title>Complete sequence of Novosphingobium aromaticivorans DSM 12444.</title>
        <authorList>
            <consortium name="US DOE Joint Genome Institute"/>
            <person name="Copeland A."/>
            <person name="Lucas S."/>
            <person name="Lapidus A."/>
            <person name="Barry K."/>
            <person name="Detter J.C."/>
            <person name="Glavina T."/>
            <person name="Hammon N."/>
            <person name="Israni S."/>
            <person name="Pitluck S."/>
            <person name="Chain P."/>
            <person name="Malfatti S."/>
            <person name="Shin M."/>
            <person name="Vergez L."/>
            <person name="Schmutz J."/>
            <person name="Larimer F."/>
            <person name="Land M."/>
            <person name="Kyrpides N."/>
            <person name="Ivanova N."/>
            <person name="Fredrickson J."/>
            <person name="Balkwill D."/>
            <person name="Romine M.F."/>
            <person name="Richardson P."/>
        </authorList>
    </citation>
    <scope>NUCLEOTIDE SEQUENCE [LARGE SCALE GENOMIC DNA]</scope>
    <source>
        <strain>ATCC 700278 / DSM 12444 / CCUG 56034 / CIP 105152 / NBRC 16084 / F199</strain>
    </source>
</reference>
<reference key="2">
    <citation type="journal article" date="2021" name="ACS Catal.">
        <title>Mechanistically diverse pathways for sulfoquinovose degradation in bacteria.</title>
        <authorList>
            <person name="Liu J."/>
            <person name="Wei Y."/>
            <person name="Ma K."/>
            <person name="An J."/>
            <person name="Liu X."/>
            <person name="Liu Y."/>
            <person name="Ang E.L."/>
            <person name="Zhao H."/>
            <person name="Zhang Y."/>
        </authorList>
    </citation>
    <scope>FUNCTION</scope>
    <scope>CATALYTIC ACTIVITY</scope>
    <source>
        <strain>ATCC 700278 / DSM 12444 / CCUG 56034 / CIP 105152 / NBRC 16084 / F199</strain>
    </source>
</reference>
<evidence type="ECO:0000250" key="1">
    <source>
        <dbReference type="UniProtKB" id="A9CEY6"/>
    </source>
</evidence>
<evidence type="ECO:0000250" key="2">
    <source>
        <dbReference type="UniProtKB" id="Q8CG76"/>
    </source>
</evidence>
<evidence type="ECO:0000269" key="3">
    <source ref="2"/>
</evidence>
<evidence type="ECO:0000303" key="4">
    <source ref="2"/>
</evidence>
<evidence type="ECO:0000305" key="5"/>
<evidence type="ECO:0000312" key="6">
    <source>
        <dbReference type="EMBL" id="ABD26880.1"/>
    </source>
</evidence>
<keyword id="KW-0119">Carbohydrate metabolism</keyword>
<keyword id="KW-0521">NADP</keyword>
<keyword id="KW-0560">Oxidoreductase</keyword>
<keyword id="KW-1185">Reference proteome</keyword>
<accession>Q2G5J3</accession>
<protein>
    <recommendedName>
        <fullName evidence="5">6-dehydroglucose reductase</fullName>
        <ecNumber evidence="3">1.1.1.432</ecNumber>
    </recommendedName>
    <alternativeName>
        <fullName evidence="4">NAD(P)-dependent D-glucose 6-dehydrogenase</fullName>
    </alternativeName>
</protein>
<name>DHGRD_NOVAD</name>
<comment type="function">
    <text evidence="3">Part of the alkanesulfonate monooxygenase (sulfo-ASMO) pathway, a D-sulfoquinovose degradation pathway that enables the complete utilization of all carbons within sulfoquinovose (SQ) with concomitant production of inorganic sulfite (Ref.2). Catalyzes the NADP-dependent reduction of 6-dehydro-D-glucose to D-glucose (Ref.2). Can also catalyze the reversible reaction, the formation of 6-dehydro-D-glucose from D-glucose in the presence of NADP(+) (Ref.2).</text>
</comment>
<comment type="catalytic activity">
    <reaction evidence="3">
        <text>D-glucose + NADP(+) = 6-dehydro-D-glucose + NADPH + H(+)</text>
        <dbReference type="Rhea" id="RHEA:70779"/>
        <dbReference type="ChEBI" id="CHEBI:4167"/>
        <dbReference type="ChEBI" id="CHEBI:15378"/>
        <dbReference type="ChEBI" id="CHEBI:57783"/>
        <dbReference type="ChEBI" id="CHEBI:58349"/>
        <dbReference type="ChEBI" id="CHEBI:190013"/>
        <dbReference type="EC" id="1.1.1.432"/>
    </reaction>
    <physiologicalReaction direction="right-to-left" evidence="3">
        <dbReference type="Rhea" id="RHEA:70781"/>
    </physiologicalReaction>
</comment>
<comment type="similarity">
    <text evidence="5">Belongs to the aldo/keto reductase family.</text>
</comment>
<organism>
    <name type="scientific">Novosphingobium aromaticivorans (strain ATCC 700278 / DSM 12444 / CCUG 56034 / CIP 105152 / NBRC 16084 / F199)</name>
    <dbReference type="NCBI Taxonomy" id="279238"/>
    <lineage>
        <taxon>Bacteria</taxon>
        <taxon>Pseudomonadati</taxon>
        <taxon>Pseudomonadota</taxon>
        <taxon>Alphaproteobacteria</taxon>
        <taxon>Sphingomonadales</taxon>
        <taxon>Sphingomonadaceae</taxon>
        <taxon>Novosphingobium</taxon>
    </lineage>
</organism>
<gene>
    <name evidence="4" type="primary">squF</name>
    <name evidence="6" type="ordered locus">Saro_2444</name>
</gene>
<sequence>MSDLPLPPAFRQLGHSGIAVSPIAWGMWRLAENGRTPADAAKLVHAALDAGINFLDTADIYGFDGSAGFGDAEALLGEVLAAEPALRERMILATKGGILPPLPYDQSADYLRKAIDDSLARLKVDVIDLWQIHRPDILAHPYEVARVLDDAVSSGKVRALGVSNFTKDQIAALNHFLGEKLATTQPEISPLRIDCFENGELDQAMMLGLTPMAWSPLGGGRLASPQTARDKAVADALDAVAQAQGVSRTVAAYSWLMAHPAGIVPIIGSQQAARIAEGAEALKVRWNRQDWYAVLVAARGERLP</sequence>
<dbReference type="EC" id="1.1.1.432" evidence="3"/>
<dbReference type="EMBL" id="CP000248">
    <property type="protein sequence ID" value="ABD26880.1"/>
    <property type="molecule type" value="Genomic_DNA"/>
</dbReference>
<dbReference type="RefSeq" id="WP_011446086.1">
    <property type="nucleotide sequence ID" value="NC_007794.1"/>
</dbReference>
<dbReference type="SMR" id="Q2G5J3"/>
<dbReference type="STRING" id="279238.Saro_2444"/>
<dbReference type="KEGG" id="nar:Saro_2444"/>
<dbReference type="eggNOG" id="COG4989">
    <property type="taxonomic scope" value="Bacteria"/>
</dbReference>
<dbReference type="HOGENOM" id="CLU_023205_8_0_5"/>
<dbReference type="Proteomes" id="UP000009134">
    <property type="component" value="Chromosome"/>
</dbReference>
<dbReference type="GO" id="GO:0005829">
    <property type="term" value="C:cytosol"/>
    <property type="evidence" value="ECO:0007669"/>
    <property type="project" value="TreeGrafter"/>
</dbReference>
<dbReference type="GO" id="GO:0016491">
    <property type="term" value="F:oxidoreductase activity"/>
    <property type="evidence" value="ECO:0007669"/>
    <property type="project" value="UniProtKB-KW"/>
</dbReference>
<dbReference type="Gene3D" id="3.20.20.100">
    <property type="entry name" value="NADP-dependent oxidoreductase domain"/>
    <property type="match status" value="1"/>
</dbReference>
<dbReference type="InterPro" id="IPR020471">
    <property type="entry name" value="AKR"/>
</dbReference>
<dbReference type="InterPro" id="IPR050523">
    <property type="entry name" value="AKR_Detox_Biosynth"/>
</dbReference>
<dbReference type="InterPro" id="IPR018170">
    <property type="entry name" value="Aldo/ket_reductase_CS"/>
</dbReference>
<dbReference type="InterPro" id="IPR023210">
    <property type="entry name" value="NADP_OxRdtase_dom"/>
</dbReference>
<dbReference type="InterPro" id="IPR036812">
    <property type="entry name" value="NADP_OxRdtase_dom_sf"/>
</dbReference>
<dbReference type="PANTHER" id="PTHR43364">
    <property type="entry name" value="NADH-SPECIFIC METHYLGLYOXAL REDUCTASE-RELATED"/>
    <property type="match status" value="1"/>
</dbReference>
<dbReference type="PANTHER" id="PTHR43364:SF1">
    <property type="entry name" value="OXIDOREDUCTASE YDHF"/>
    <property type="match status" value="1"/>
</dbReference>
<dbReference type="Pfam" id="PF00248">
    <property type="entry name" value="Aldo_ket_red"/>
    <property type="match status" value="1"/>
</dbReference>
<dbReference type="PRINTS" id="PR00069">
    <property type="entry name" value="ALDKETRDTASE"/>
</dbReference>
<dbReference type="SUPFAM" id="SSF51430">
    <property type="entry name" value="NAD(P)-linked oxidoreductase"/>
    <property type="match status" value="1"/>
</dbReference>
<dbReference type="PROSITE" id="PS00062">
    <property type="entry name" value="ALDOKETO_REDUCTASE_2"/>
    <property type="match status" value="1"/>
</dbReference>
<proteinExistence type="evidence at protein level"/>
<feature type="chain" id="PRO_0000458918" description="6-dehydroglucose reductase">
    <location>
        <begin position="1"/>
        <end position="304"/>
    </location>
</feature>
<feature type="active site" description="Proton donor" evidence="2">
    <location>
        <position position="61"/>
    </location>
</feature>
<feature type="binding site" evidence="1">
    <location>
        <position position="28"/>
    </location>
    <ligand>
        <name>NADP(+)</name>
        <dbReference type="ChEBI" id="CHEBI:58349"/>
    </ligand>
</feature>
<feature type="binding site" evidence="1">
    <location>
        <position position="29"/>
    </location>
    <ligand>
        <name>NADP(+)</name>
        <dbReference type="ChEBI" id="CHEBI:58349"/>
    </ligand>
</feature>
<feature type="binding site" evidence="1">
    <location>
        <position position="56"/>
    </location>
    <ligand>
        <name>NADP(+)</name>
        <dbReference type="ChEBI" id="CHEBI:58349"/>
    </ligand>
</feature>
<feature type="binding site" evidence="1">
    <location>
        <position position="61"/>
    </location>
    <ligand>
        <name>D-glucose</name>
        <dbReference type="ChEBI" id="CHEBI:4167"/>
    </ligand>
</feature>
<feature type="binding site" evidence="1">
    <location>
        <position position="133"/>
    </location>
    <ligand>
        <name>D-glucose</name>
        <dbReference type="ChEBI" id="CHEBI:4167"/>
    </ligand>
</feature>
<feature type="binding site" evidence="1">
    <location>
        <position position="134"/>
    </location>
    <ligand>
        <name>D-glucose</name>
        <dbReference type="ChEBI" id="CHEBI:4167"/>
    </ligand>
</feature>
<feature type="binding site" evidence="1">
    <location>
        <position position="163"/>
    </location>
    <ligand>
        <name>NADP(+)</name>
        <dbReference type="ChEBI" id="CHEBI:58349"/>
    </ligand>
</feature>
<feature type="binding site" evidence="1">
    <location>
        <position position="164"/>
    </location>
    <ligand>
        <name>NADP(+)</name>
        <dbReference type="ChEBI" id="CHEBI:58349"/>
    </ligand>
</feature>
<feature type="binding site" evidence="1">
    <location>
        <position position="185"/>
    </location>
    <ligand>
        <name>NADP(+)</name>
        <dbReference type="ChEBI" id="CHEBI:58349"/>
    </ligand>
</feature>
<feature type="binding site" evidence="1">
    <location>
        <position position="215"/>
    </location>
    <ligand>
        <name>NADP(+)</name>
        <dbReference type="ChEBI" id="CHEBI:58349"/>
    </ligand>
</feature>
<feature type="binding site" evidence="1">
    <location>
        <position position="217"/>
    </location>
    <ligand>
        <name>NADP(+)</name>
        <dbReference type="ChEBI" id="CHEBI:58349"/>
    </ligand>
</feature>
<feature type="binding site" evidence="1">
    <location>
        <position position="219"/>
    </location>
    <ligand>
        <name>NADP(+)</name>
        <dbReference type="ChEBI" id="CHEBI:58349"/>
    </ligand>
</feature>
<feature type="binding site" evidence="1">
    <location>
        <position position="268"/>
    </location>
    <ligand>
        <name>NADP(+)</name>
        <dbReference type="ChEBI" id="CHEBI:58349"/>
    </ligand>
</feature>
<feature type="binding site" evidence="1">
    <location>
        <position position="269"/>
    </location>
    <ligand>
        <name>NADP(+)</name>
        <dbReference type="ChEBI" id="CHEBI:58349"/>
    </ligand>
</feature>
<feature type="binding site" evidence="1">
    <location>
        <position position="270"/>
    </location>
    <ligand>
        <name>NADP(+)</name>
        <dbReference type="ChEBI" id="CHEBI:58349"/>
    </ligand>
</feature>
<feature type="binding site" evidence="1">
    <location>
        <position position="274"/>
    </location>
    <ligand>
        <name>NADP(+)</name>
        <dbReference type="ChEBI" id="CHEBI:58349"/>
    </ligand>
</feature>